<feature type="chain" id="PRO_0000384796" description="Ribosome maturation factor RimP">
    <location>
        <begin position="1"/>
        <end position="160"/>
    </location>
</feature>
<organism>
    <name type="scientific">Syntrophus aciditrophicus (strain SB)</name>
    <dbReference type="NCBI Taxonomy" id="56780"/>
    <lineage>
        <taxon>Bacteria</taxon>
        <taxon>Pseudomonadati</taxon>
        <taxon>Thermodesulfobacteriota</taxon>
        <taxon>Syntrophia</taxon>
        <taxon>Syntrophales</taxon>
        <taxon>Syntrophaceae</taxon>
        <taxon>Syntrophus</taxon>
    </lineage>
</organism>
<evidence type="ECO:0000255" key="1">
    <source>
        <dbReference type="HAMAP-Rule" id="MF_01077"/>
    </source>
</evidence>
<sequence length="160" mass="18670">MVNEFVKKLREDIWQLAEPVIASEGLELVEVECLRMKTRWLVRIYMDREGGVTLDDCSEISNQLGDVLDVHDLPPDPYTLEVSSPGLDRPLVRDKDFVRYQGCEVSIRLEQKVDGIRNFRGRLLEYVEEDGRKILVIEMASKLYRIPRDLIVKANLVYRF</sequence>
<protein>
    <recommendedName>
        <fullName evidence="1">Ribosome maturation factor RimP</fullName>
    </recommendedName>
</protein>
<proteinExistence type="inferred from homology"/>
<reference key="1">
    <citation type="journal article" date="2007" name="Proc. Natl. Acad. Sci. U.S.A.">
        <title>The genome of Syntrophus aciditrophicus: life at the thermodynamic limit of microbial growth.</title>
        <authorList>
            <person name="McInerney M.J."/>
            <person name="Rohlin L."/>
            <person name="Mouttaki H."/>
            <person name="Kim U."/>
            <person name="Krupp R.S."/>
            <person name="Rios-Hernandez L."/>
            <person name="Sieber J."/>
            <person name="Struchtemeyer C.G."/>
            <person name="Bhattacharyya A."/>
            <person name="Campbell J.W."/>
            <person name="Gunsalus R.P."/>
        </authorList>
    </citation>
    <scope>NUCLEOTIDE SEQUENCE [LARGE SCALE GENOMIC DNA]</scope>
    <source>
        <strain>SB</strain>
    </source>
</reference>
<gene>
    <name evidence="1" type="primary">rimP</name>
    <name type="ordered locus">SYNAS_26780</name>
    <name type="ORF">SYN_01790</name>
</gene>
<accession>Q2LWU4</accession>
<keyword id="KW-0963">Cytoplasm</keyword>
<keyword id="KW-1185">Reference proteome</keyword>
<keyword id="KW-0690">Ribosome biogenesis</keyword>
<dbReference type="EMBL" id="CP000252">
    <property type="protein sequence ID" value="ABC78557.1"/>
    <property type="molecule type" value="Genomic_DNA"/>
</dbReference>
<dbReference type="RefSeq" id="WP_011418576.1">
    <property type="nucleotide sequence ID" value="NC_007759.1"/>
</dbReference>
<dbReference type="SMR" id="Q2LWU4"/>
<dbReference type="FunCoup" id="Q2LWU4">
    <property type="interactions" value="323"/>
</dbReference>
<dbReference type="STRING" id="56780.SYN_01790"/>
<dbReference type="KEGG" id="sat:SYN_01790"/>
<dbReference type="eggNOG" id="COG0779">
    <property type="taxonomic scope" value="Bacteria"/>
</dbReference>
<dbReference type="HOGENOM" id="CLU_070525_2_2_7"/>
<dbReference type="InParanoid" id="Q2LWU4"/>
<dbReference type="OrthoDB" id="9805006at2"/>
<dbReference type="Proteomes" id="UP000001933">
    <property type="component" value="Chromosome"/>
</dbReference>
<dbReference type="GO" id="GO:0005829">
    <property type="term" value="C:cytosol"/>
    <property type="evidence" value="ECO:0007669"/>
    <property type="project" value="TreeGrafter"/>
</dbReference>
<dbReference type="GO" id="GO:0000028">
    <property type="term" value="P:ribosomal small subunit assembly"/>
    <property type="evidence" value="ECO:0007669"/>
    <property type="project" value="TreeGrafter"/>
</dbReference>
<dbReference type="GO" id="GO:0006412">
    <property type="term" value="P:translation"/>
    <property type="evidence" value="ECO:0007669"/>
    <property type="project" value="TreeGrafter"/>
</dbReference>
<dbReference type="CDD" id="cd01734">
    <property type="entry name" value="YlxS_C"/>
    <property type="match status" value="1"/>
</dbReference>
<dbReference type="FunFam" id="3.30.300.70:FF:000001">
    <property type="entry name" value="Ribosome maturation factor RimP"/>
    <property type="match status" value="1"/>
</dbReference>
<dbReference type="Gene3D" id="2.30.30.180">
    <property type="entry name" value="Ribosome maturation factor RimP, C-terminal domain"/>
    <property type="match status" value="1"/>
</dbReference>
<dbReference type="Gene3D" id="3.30.300.70">
    <property type="entry name" value="RimP-like superfamily, N-terminal"/>
    <property type="match status" value="1"/>
</dbReference>
<dbReference type="HAMAP" id="MF_01077">
    <property type="entry name" value="RimP"/>
    <property type="match status" value="1"/>
</dbReference>
<dbReference type="InterPro" id="IPR003728">
    <property type="entry name" value="Ribosome_maturation_RimP"/>
</dbReference>
<dbReference type="InterPro" id="IPR028998">
    <property type="entry name" value="RimP_C"/>
</dbReference>
<dbReference type="InterPro" id="IPR036847">
    <property type="entry name" value="RimP_C_sf"/>
</dbReference>
<dbReference type="InterPro" id="IPR028989">
    <property type="entry name" value="RimP_N"/>
</dbReference>
<dbReference type="InterPro" id="IPR035956">
    <property type="entry name" value="RimP_N_sf"/>
</dbReference>
<dbReference type="PANTHER" id="PTHR33867">
    <property type="entry name" value="RIBOSOME MATURATION FACTOR RIMP"/>
    <property type="match status" value="1"/>
</dbReference>
<dbReference type="PANTHER" id="PTHR33867:SF1">
    <property type="entry name" value="RIBOSOME MATURATION FACTOR RIMP"/>
    <property type="match status" value="1"/>
</dbReference>
<dbReference type="Pfam" id="PF17384">
    <property type="entry name" value="DUF150_C"/>
    <property type="match status" value="1"/>
</dbReference>
<dbReference type="Pfam" id="PF02576">
    <property type="entry name" value="RimP_N"/>
    <property type="match status" value="1"/>
</dbReference>
<dbReference type="SUPFAM" id="SSF74942">
    <property type="entry name" value="YhbC-like, C-terminal domain"/>
    <property type="match status" value="1"/>
</dbReference>
<dbReference type="SUPFAM" id="SSF75420">
    <property type="entry name" value="YhbC-like, N-terminal domain"/>
    <property type="match status" value="1"/>
</dbReference>
<name>RIMP_SYNAS</name>
<comment type="function">
    <text evidence="1">Required for maturation of 30S ribosomal subunits.</text>
</comment>
<comment type="subcellular location">
    <subcellularLocation>
        <location evidence="1">Cytoplasm</location>
    </subcellularLocation>
</comment>
<comment type="similarity">
    <text evidence="1">Belongs to the RimP family.</text>
</comment>